<accession>F5HI85</accession>
<protein>
    <recommendedName>
        <fullName evidence="1">Uracil-DNA glycosylase</fullName>
        <shortName evidence="1">UDG</shortName>
        <ecNumber evidence="1">3.2.2.27</ecNumber>
    </recommendedName>
    <alternativeName>
        <fullName evidence="1">UNG</fullName>
    </alternativeName>
</protein>
<name>UNG_HCMVM</name>
<organism>
    <name type="scientific">Human cytomegalovirus (strain Merlin)</name>
    <name type="common">HHV-5</name>
    <name type="synonym">Human herpesvirus 5</name>
    <dbReference type="NCBI Taxonomy" id="295027"/>
    <lineage>
        <taxon>Viruses</taxon>
        <taxon>Duplodnaviria</taxon>
        <taxon>Heunggongvirae</taxon>
        <taxon>Peploviricota</taxon>
        <taxon>Herviviricetes</taxon>
        <taxon>Herpesvirales</taxon>
        <taxon>Orthoherpesviridae</taxon>
        <taxon>Betaherpesvirinae</taxon>
        <taxon>Cytomegalovirus</taxon>
        <taxon>Cytomegalovirus humanbeta5</taxon>
        <taxon>Human cytomegalovirus</taxon>
    </lineage>
</organism>
<proteinExistence type="inferred from homology"/>
<dbReference type="EC" id="3.2.2.27" evidence="1"/>
<dbReference type="EMBL" id="AY446894">
    <property type="protein sequence ID" value="AAR31658.1"/>
    <property type="molecule type" value="Genomic_DNA"/>
</dbReference>
<dbReference type="RefSeq" id="YP_081554.1">
    <property type="nucleotide sequence ID" value="NC_006273.2"/>
</dbReference>
<dbReference type="SMR" id="F5HI85"/>
<dbReference type="BioGRID" id="1678092">
    <property type="interactions" value="1"/>
</dbReference>
<dbReference type="GeneID" id="3077539"/>
<dbReference type="KEGG" id="vg:3077539"/>
<dbReference type="Reactome" id="R-HSA-9609690">
    <property type="pathway name" value="HCMV Early Events"/>
</dbReference>
<dbReference type="Proteomes" id="UP000000938">
    <property type="component" value="Segment"/>
</dbReference>
<dbReference type="GO" id="GO:0042025">
    <property type="term" value="C:host cell nucleus"/>
    <property type="evidence" value="ECO:0007669"/>
    <property type="project" value="UniProtKB-SubCell"/>
</dbReference>
<dbReference type="GO" id="GO:0004844">
    <property type="term" value="F:uracil DNA N-glycosylase activity"/>
    <property type="evidence" value="ECO:0007669"/>
    <property type="project" value="UniProtKB-EC"/>
</dbReference>
<dbReference type="GO" id="GO:0097510">
    <property type="term" value="P:base-excision repair, AP site formation via deaminated base removal"/>
    <property type="evidence" value="ECO:0007669"/>
    <property type="project" value="TreeGrafter"/>
</dbReference>
<dbReference type="CDD" id="cd10027">
    <property type="entry name" value="UDG-F1-like"/>
    <property type="match status" value="1"/>
</dbReference>
<dbReference type="Gene3D" id="3.40.470.10">
    <property type="entry name" value="Uracil-DNA glycosylase-like domain"/>
    <property type="match status" value="1"/>
</dbReference>
<dbReference type="HAMAP" id="MF_00148">
    <property type="entry name" value="UDG"/>
    <property type="match status" value="1"/>
</dbReference>
<dbReference type="InterPro" id="IPR002043">
    <property type="entry name" value="UDG_fam1"/>
</dbReference>
<dbReference type="InterPro" id="IPR018085">
    <property type="entry name" value="Ura-DNA_Glyclase_AS"/>
</dbReference>
<dbReference type="InterPro" id="IPR005122">
    <property type="entry name" value="Uracil-DNA_glycosylase-like"/>
</dbReference>
<dbReference type="InterPro" id="IPR036895">
    <property type="entry name" value="Uracil-DNA_glycosylase-like_sf"/>
</dbReference>
<dbReference type="NCBIfam" id="NF003588">
    <property type="entry name" value="PRK05254.1-1"/>
    <property type="match status" value="1"/>
</dbReference>
<dbReference type="NCBIfam" id="NF003589">
    <property type="entry name" value="PRK05254.1-2"/>
    <property type="match status" value="1"/>
</dbReference>
<dbReference type="NCBIfam" id="NF003592">
    <property type="entry name" value="PRK05254.1-5"/>
    <property type="match status" value="1"/>
</dbReference>
<dbReference type="NCBIfam" id="TIGR00628">
    <property type="entry name" value="ung"/>
    <property type="match status" value="1"/>
</dbReference>
<dbReference type="PANTHER" id="PTHR11264">
    <property type="entry name" value="URACIL-DNA GLYCOSYLASE"/>
    <property type="match status" value="1"/>
</dbReference>
<dbReference type="PANTHER" id="PTHR11264:SF0">
    <property type="entry name" value="URACIL-DNA GLYCOSYLASE"/>
    <property type="match status" value="1"/>
</dbReference>
<dbReference type="Pfam" id="PF03167">
    <property type="entry name" value="UDG"/>
    <property type="match status" value="1"/>
</dbReference>
<dbReference type="SMART" id="SM00986">
    <property type="entry name" value="UDG"/>
    <property type="match status" value="1"/>
</dbReference>
<dbReference type="SMART" id="SM00987">
    <property type="entry name" value="UreE_C"/>
    <property type="match status" value="1"/>
</dbReference>
<dbReference type="SUPFAM" id="SSF52141">
    <property type="entry name" value="Uracil-DNA glycosylase-like"/>
    <property type="match status" value="1"/>
</dbReference>
<dbReference type="PROSITE" id="PS00130">
    <property type="entry name" value="U_DNA_GLYCOSYLASE"/>
    <property type="match status" value="1"/>
</dbReference>
<reference key="1">
    <citation type="journal article" date="2004" name="J. Gen. Virol.">
        <title>Genetic content of wild-type human cytomegalovirus.</title>
        <authorList>
            <person name="Dolan A."/>
            <person name="Cunningham C."/>
            <person name="Hector R.D."/>
            <person name="Hassan-Walker A.F."/>
            <person name="Lee L."/>
            <person name="Addison C."/>
            <person name="Dargan D.J."/>
            <person name="McGeoch D.J."/>
            <person name="Gatherer D."/>
            <person name="Emery V.C."/>
            <person name="Griffiths P.D."/>
            <person name="Sinzger C."/>
            <person name="McSharry B.P."/>
            <person name="Wilkinson G.W.G."/>
            <person name="Davison A.J."/>
        </authorList>
    </citation>
    <scope>NUCLEOTIDE SEQUENCE [LARGE SCALE GENOMIC DNA]</scope>
    <source>
        <strain>Merlin</strain>
    </source>
</reference>
<keyword id="KW-0227">DNA damage</keyword>
<keyword id="KW-0234">DNA repair</keyword>
<keyword id="KW-1048">Host nucleus</keyword>
<keyword id="KW-0378">Hydrolase</keyword>
<keyword id="KW-1185">Reference proteome</keyword>
<gene>
    <name type="primary">UL114</name>
</gene>
<evidence type="ECO:0000255" key="1">
    <source>
        <dbReference type="HAMAP-Rule" id="MF_04046"/>
    </source>
</evidence>
<comment type="function">
    <text evidence="1">Excises uracil residues from the DNA which can arise as a result of misincorporation of dUMP residues by DNA polymerase or deamination of cytosines. Therefore may reduce deleterious uracil incorporation into the viral genome, particularly in terminally differentiated cells which lack DNA repair enzymes.</text>
</comment>
<comment type="catalytic activity">
    <reaction evidence="1">
        <text>Hydrolyzes single-stranded DNA or mismatched double-stranded DNA and polynucleotides, releasing free uracil.</text>
        <dbReference type="EC" id="3.2.2.27"/>
    </reaction>
</comment>
<comment type="subcellular location">
    <subcellularLocation>
        <location evidence="1">Host nucleus</location>
    </subcellularLocation>
</comment>
<comment type="similarity">
    <text evidence="1">Belongs to the uracil-DNA glycosylase (UDG) superfamily. UNG family.</text>
</comment>
<organismHost>
    <name type="scientific">Homo sapiens</name>
    <name type="common">Human</name>
    <dbReference type="NCBI Taxonomy" id="9606"/>
</organismHost>
<feature type="chain" id="PRO_0000416439" description="Uracil-DNA glycosylase">
    <location>
        <begin position="1"/>
        <end position="250"/>
    </location>
</feature>
<feature type="active site" description="Proton acceptor" evidence="1">
    <location>
        <position position="91"/>
    </location>
</feature>
<sequence>MALKQWMLANIADNKGSLLTPDEQARVFCLSADWIRFLSLPDHDTVLLRDTVAAVEGARQLEMVYPAPEHVHRWSYLCPPEQVRVVIVGQDPYCDGSASGLAFGTLAGRPPPPSLNNVFRELARTVDGFQRPASGCLDAWARRGVLLLNTVFTVVHGQPGSHRHLGWQTLSNHVIRRLSERREHLVFMLWGADAHTCEYLIDRRRHLVLKSCHPSPRNTTRAFVGNDHFILANAYLDTHYRETMDWRLCG</sequence>